<sequence length="309" mass="34836">MPVINNQVVLKHLVSMELLTNEEVLGLISRGSEFKAKNVPIANNSHYFTSNLFFENSTRTHKSFEMAERHMGLQVVEFNTDTSSVNKGETLYDTILTMSALGVDICVVRHPEVDYYQSLIKSPSITASIVNGGDGSGQHPSQCLLDLMTIYEEFGHFEGLKIMIAGDLVHSRVAKSNMQILKRLGAEIYFSGPDEWYSKEFEAYGEYRKIDDIIDQLDVLMLLRVQHERHNGSAGFSKEEYHKNFGLTEERYEKLKDTAIIMHPAPVNRNAEIADSLVEAKKARIVAQMENGVYVRMAILEAILNGRSA</sequence>
<name>PYRB_STRU0</name>
<gene>
    <name evidence="1" type="primary">pyrB</name>
    <name type="ordered locus">SUB0733</name>
</gene>
<comment type="function">
    <text evidence="1">Catalyzes the condensation of carbamoyl phosphate and aspartate to form carbamoyl aspartate and inorganic phosphate, the committed step in the de novo pyrimidine nucleotide biosynthesis pathway.</text>
</comment>
<comment type="catalytic activity">
    <reaction evidence="1">
        <text>carbamoyl phosphate + L-aspartate = N-carbamoyl-L-aspartate + phosphate + H(+)</text>
        <dbReference type="Rhea" id="RHEA:20013"/>
        <dbReference type="ChEBI" id="CHEBI:15378"/>
        <dbReference type="ChEBI" id="CHEBI:29991"/>
        <dbReference type="ChEBI" id="CHEBI:32814"/>
        <dbReference type="ChEBI" id="CHEBI:43474"/>
        <dbReference type="ChEBI" id="CHEBI:58228"/>
        <dbReference type="EC" id="2.1.3.2"/>
    </reaction>
</comment>
<comment type="pathway">
    <text evidence="1">Pyrimidine metabolism; UMP biosynthesis via de novo pathway; (S)-dihydroorotate from bicarbonate: step 2/3.</text>
</comment>
<comment type="subunit">
    <text evidence="1">Heterododecamer (2C3:3R2) of six catalytic PyrB chains organized as two trimers (C3), and six regulatory PyrI chains organized as three dimers (R2).</text>
</comment>
<comment type="similarity">
    <text evidence="1">Belongs to the aspartate/ornithine carbamoyltransferase superfamily. ATCase family.</text>
</comment>
<organism>
    <name type="scientific">Streptococcus uberis (strain ATCC BAA-854 / 0140J)</name>
    <dbReference type="NCBI Taxonomy" id="218495"/>
    <lineage>
        <taxon>Bacteria</taxon>
        <taxon>Bacillati</taxon>
        <taxon>Bacillota</taxon>
        <taxon>Bacilli</taxon>
        <taxon>Lactobacillales</taxon>
        <taxon>Streptococcaceae</taxon>
        <taxon>Streptococcus</taxon>
    </lineage>
</organism>
<reference key="1">
    <citation type="journal article" date="2009" name="BMC Genomics">
        <title>Evidence for niche adaptation in the genome of the bovine pathogen Streptococcus uberis.</title>
        <authorList>
            <person name="Ward P.N."/>
            <person name="Holden M.T.G."/>
            <person name="Leigh J.A."/>
            <person name="Lennard N."/>
            <person name="Bignell A."/>
            <person name="Barron A."/>
            <person name="Clark L."/>
            <person name="Quail M.A."/>
            <person name="Woodward J."/>
            <person name="Barrell B.G."/>
            <person name="Egan S.A."/>
            <person name="Field T.R."/>
            <person name="Maskell D."/>
            <person name="Kehoe M."/>
            <person name="Dowson C.G."/>
            <person name="Chanter N."/>
            <person name="Whatmore A.M."/>
            <person name="Bentley S.D."/>
            <person name="Parkhill J."/>
        </authorList>
    </citation>
    <scope>NUCLEOTIDE SEQUENCE [LARGE SCALE GENOMIC DNA]</scope>
    <source>
        <strain>ATCC BAA-854 / 0140J</strain>
    </source>
</reference>
<accession>B9DU62</accession>
<proteinExistence type="inferred from homology"/>
<feature type="chain" id="PRO_1000116161" description="Aspartate carbamoyltransferase catalytic subunit">
    <location>
        <begin position="1"/>
        <end position="309"/>
    </location>
</feature>
<feature type="binding site" evidence="1">
    <location>
        <position position="59"/>
    </location>
    <ligand>
        <name>carbamoyl phosphate</name>
        <dbReference type="ChEBI" id="CHEBI:58228"/>
    </ligand>
</feature>
<feature type="binding site" evidence="1">
    <location>
        <position position="60"/>
    </location>
    <ligand>
        <name>carbamoyl phosphate</name>
        <dbReference type="ChEBI" id="CHEBI:58228"/>
    </ligand>
</feature>
<feature type="binding site" evidence="1">
    <location>
        <position position="87"/>
    </location>
    <ligand>
        <name>L-aspartate</name>
        <dbReference type="ChEBI" id="CHEBI:29991"/>
    </ligand>
</feature>
<feature type="binding site" evidence="1">
    <location>
        <position position="109"/>
    </location>
    <ligand>
        <name>carbamoyl phosphate</name>
        <dbReference type="ChEBI" id="CHEBI:58228"/>
    </ligand>
</feature>
<feature type="binding site" evidence="1">
    <location>
        <position position="139"/>
    </location>
    <ligand>
        <name>carbamoyl phosphate</name>
        <dbReference type="ChEBI" id="CHEBI:58228"/>
    </ligand>
</feature>
<feature type="binding site" evidence="1">
    <location>
        <position position="142"/>
    </location>
    <ligand>
        <name>carbamoyl phosphate</name>
        <dbReference type="ChEBI" id="CHEBI:58228"/>
    </ligand>
</feature>
<feature type="binding site" evidence="1">
    <location>
        <position position="172"/>
    </location>
    <ligand>
        <name>L-aspartate</name>
        <dbReference type="ChEBI" id="CHEBI:29991"/>
    </ligand>
</feature>
<feature type="binding site" evidence="1">
    <location>
        <position position="224"/>
    </location>
    <ligand>
        <name>L-aspartate</name>
        <dbReference type="ChEBI" id="CHEBI:29991"/>
    </ligand>
</feature>
<feature type="binding site" evidence="1">
    <location>
        <position position="265"/>
    </location>
    <ligand>
        <name>carbamoyl phosphate</name>
        <dbReference type="ChEBI" id="CHEBI:58228"/>
    </ligand>
</feature>
<feature type="binding site" evidence="1">
    <location>
        <position position="266"/>
    </location>
    <ligand>
        <name>carbamoyl phosphate</name>
        <dbReference type="ChEBI" id="CHEBI:58228"/>
    </ligand>
</feature>
<protein>
    <recommendedName>
        <fullName evidence="1">Aspartate carbamoyltransferase catalytic subunit</fullName>
        <ecNumber evidence="1">2.1.3.2</ecNumber>
    </recommendedName>
    <alternativeName>
        <fullName evidence="1">Aspartate transcarbamylase</fullName>
        <shortName evidence="1">ATCase</shortName>
    </alternativeName>
</protein>
<keyword id="KW-0665">Pyrimidine biosynthesis</keyword>
<keyword id="KW-1185">Reference proteome</keyword>
<keyword id="KW-0808">Transferase</keyword>
<dbReference type="EC" id="2.1.3.2" evidence="1"/>
<dbReference type="EMBL" id="AM946015">
    <property type="protein sequence ID" value="CAR41660.1"/>
    <property type="molecule type" value="Genomic_DNA"/>
</dbReference>
<dbReference type="RefSeq" id="WP_012658250.1">
    <property type="nucleotide sequence ID" value="NC_012004.1"/>
</dbReference>
<dbReference type="SMR" id="B9DU62"/>
<dbReference type="STRING" id="218495.SUB0733"/>
<dbReference type="KEGG" id="sub:SUB0733"/>
<dbReference type="eggNOG" id="COG0540">
    <property type="taxonomic scope" value="Bacteria"/>
</dbReference>
<dbReference type="HOGENOM" id="CLU_043846_2_1_9"/>
<dbReference type="OrthoDB" id="9774690at2"/>
<dbReference type="UniPathway" id="UPA00070">
    <property type="reaction ID" value="UER00116"/>
</dbReference>
<dbReference type="Proteomes" id="UP000000449">
    <property type="component" value="Chromosome"/>
</dbReference>
<dbReference type="GO" id="GO:0005829">
    <property type="term" value="C:cytosol"/>
    <property type="evidence" value="ECO:0007669"/>
    <property type="project" value="TreeGrafter"/>
</dbReference>
<dbReference type="GO" id="GO:0016597">
    <property type="term" value="F:amino acid binding"/>
    <property type="evidence" value="ECO:0007669"/>
    <property type="project" value="InterPro"/>
</dbReference>
<dbReference type="GO" id="GO:0004070">
    <property type="term" value="F:aspartate carbamoyltransferase activity"/>
    <property type="evidence" value="ECO:0007669"/>
    <property type="project" value="UniProtKB-UniRule"/>
</dbReference>
<dbReference type="GO" id="GO:0006207">
    <property type="term" value="P:'de novo' pyrimidine nucleobase biosynthetic process"/>
    <property type="evidence" value="ECO:0007669"/>
    <property type="project" value="InterPro"/>
</dbReference>
<dbReference type="GO" id="GO:0044205">
    <property type="term" value="P:'de novo' UMP biosynthetic process"/>
    <property type="evidence" value="ECO:0007669"/>
    <property type="project" value="UniProtKB-UniRule"/>
</dbReference>
<dbReference type="GO" id="GO:0006520">
    <property type="term" value="P:amino acid metabolic process"/>
    <property type="evidence" value="ECO:0007669"/>
    <property type="project" value="InterPro"/>
</dbReference>
<dbReference type="FunFam" id="3.40.50.1370:FF:000011">
    <property type="entry name" value="Aspartate carbamoyltransferase"/>
    <property type="match status" value="1"/>
</dbReference>
<dbReference type="Gene3D" id="3.40.50.1370">
    <property type="entry name" value="Aspartate/ornithine carbamoyltransferase"/>
    <property type="match status" value="2"/>
</dbReference>
<dbReference type="HAMAP" id="MF_00001">
    <property type="entry name" value="Asp_carb_tr"/>
    <property type="match status" value="1"/>
</dbReference>
<dbReference type="InterPro" id="IPR006132">
    <property type="entry name" value="Asp/Orn_carbamoyltranf_P-bd"/>
</dbReference>
<dbReference type="InterPro" id="IPR006130">
    <property type="entry name" value="Asp/Orn_carbamoylTrfase"/>
</dbReference>
<dbReference type="InterPro" id="IPR036901">
    <property type="entry name" value="Asp/Orn_carbamoylTrfase_sf"/>
</dbReference>
<dbReference type="InterPro" id="IPR002082">
    <property type="entry name" value="Asp_carbamoyltransf"/>
</dbReference>
<dbReference type="InterPro" id="IPR006131">
    <property type="entry name" value="Asp_carbamoyltransf_Asp/Orn-bd"/>
</dbReference>
<dbReference type="NCBIfam" id="TIGR00670">
    <property type="entry name" value="asp_carb_tr"/>
    <property type="match status" value="1"/>
</dbReference>
<dbReference type="NCBIfam" id="NF002032">
    <property type="entry name" value="PRK00856.1"/>
    <property type="match status" value="1"/>
</dbReference>
<dbReference type="PANTHER" id="PTHR45753:SF6">
    <property type="entry name" value="ASPARTATE CARBAMOYLTRANSFERASE"/>
    <property type="match status" value="1"/>
</dbReference>
<dbReference type="PANTHER" id="PTHR45753">
    <property type="entry name" value="ORNITHINE CARBAMOYLTRANSFERASE, MITOCHONDRIAL"/>
    <property type="match status" value="1"/>
</dbReference>
<dbReference type="Pfam" id="PF00185">
    <property type="entry name" value="OTCace"/>
    <property type="match status" value="1"/>
</dbReference>
<dbReference type="Pfam" id="PF02729">
    <property type="entry name" value="OTCace_N"/>
    <property type="match status" value="1"/>
</dbReference>
<dbReference type="PRINTS" id="PR00100">
    <property type="entry name" value="AOTCASE"/>
</dbReference>
<dbReference type="PRINTS" id="PR00101">
    <property type="entry name" value="ATCASE"/>
</dbReference>
<dbReference type="SUPFAM" id="SSF53671">
    <property type="entry name" value="Aspartate/ornithine carbamoyltransferase"/>
    <property type="match status" value="1"/>
</dbReference>
<dbReference type="PROSITE" id="PS00097">
    <property type="entry name" value="CARBAMOYLTRANSFERASE"/>
    <property type="match status" value="1"/>
</dbReference>
<evidence type="ECO:0000255" key="1">
    <source>
        <dbReference type="HAMAP-Rule" id="MF_00001"/>
    </source>
</evidence>